<feature type="chain" id="PRO_0000061121" description="Cytochrome b">
    <location>
        <begin position="1"/>
        <end position="371"/>
    </location>
</feature>
<feature type="transmembrane region" description="Helical" evidence="2">
    <location>
        <begin position="25"/>
        <end position="45"/>
    </location>
</feature>
<feature type="transmembrane region" description="Helical" evidence="2">
    <location>
        <begin position="69"/>
        <end position="90"/>
    </location>
</feature>
<feature type="transmembrane region" description="Helical" evidence="2">
    <location>
        <begin position="105"/>
        <end position="125"/>
    </location>
</feature>
<feature type="transmembrane region" description="Helical" evidence="2">
    <location>
        <begin position="170"/>
        <end position="190"/>
    </location>
</feature>
<feature type="transmembrane region" description="Helical" evidence="2">
    <location>
        <begin position="218"/>
        <end position="238"/>
    </location>
</feature>
<feature type="transmembrane region" description="Helical" evidence="2">
    <location>
        <begin position="280"/>
        <end position="300"/>
    </location>
</feature>
<feature type="transmembrane region" description="Helical" evidence="2">
    <location>
        <begin position="312"/>
        <end position="332"/>
    </location>
</feature>
<feature type="transmembrane region" description="Helical" evidence="2">
    <location>
        <begin position="339"/>
        <end position="358"/>
    </location>
</feature>
<feature type="binding site" description="axial binding residue" evidence="2">
    <location>
        <position position="75"/>
    </location>
    <ligand>
        <name>heme b</name>
        <dbReference type="ChEBI" id="CHEBI:60344"/>
        <label>b562</label>
    </ligand>
    <ligandPart>
        <name>Fe</name>
        <dbReference type="ChEBI" id="CHEBI:18248"/>
    </ligandPart>
</feature>
<feature type="binding site" description="axial binding residue" evidence="2">
    <location>
        <position position="89"/>
    </location>
    <ligand>
        <name>heme b</name>
        <dbReference type="ChEBI" id="CHEBI:60344"/>
        <label>b566</label>
    </ligand>
    <ligandPart>
        <name>Fe</name>
        <dbReference type="ChEBI" id="CHEBI:18248"/>
    </ligandPart>
</feature>
<feature type="binding site" description="axial binding residue" evidence="2">
    <location>
        <position position="174"/>
    </location>
    <ligand>
        <name>heme b</name>
        <dbReference type="ChEBI" id="CHEBI:60344"/>
        <label>b562</label>
    </ligand>
    <ligandPart>
        <name>Fe</name>
        <dbReference type="ChEBI" id="CHEBI:18248"/>
    </ligandPart>
</feature>
<feature type="binding site" description="axial binding residue" evidence="2">
    <location>
        <position position="188"/>
    </location>
    <ligand>
        <name>heme b</name>
        <dbReference type="ChEBI" id="CHEBI:60344"/>
        <label>b566</label>
    </ligand>
    <ligandPart>
        <name>Fe</name>
        <dbReference type="ChEBI" id="CHEBI:18248"/>
    </ligandPart>
</feature>
<feature type="binding site" evidence="2">
    <location>
        <position position="193"/>
    </location>
    <ligand>
        <name>a ubiquinone</name>
        <dbReference type="ChEBI" id="CHEBI:16389"/>
    </ligand>
</feature>
<feature type="sequence variant">
    <original>F</original>
    <variation>L</variation>
    <location>
        <position position="171"/>
    </location>
</feature>
<feature type="sequence variant">
    <original>L</original>
    <variation>S</variation>
    <location>
        <position position="187"/>
    </location>
</feature>
<feature type="sequence variant">
    <original>G</original>
    <variation>E</variation>
    <location>
        <position position="202"/>
    </location>
</feature>
<feature type="sequence variant">
    <original>C</original>
    <variation>S</variation>
    <location>
        <position position="295"/>
    </location>
</feature>
<name>CYB_LIAMS</name>
<organism>
    <name type="scientific">Liasis mackloti savuensis</name>
    <name type="common">Savu python</name>
    <name type="synonym">Liasis savuensis</name>
    <dbReference type="NCBI Taxonomy" id="51890"/>
    <lineage>
        <taxon>Eukaryota</taxon>
        <taxon>Metazoa</taxon>
        <taxon>Chordata</taxon>
        <taxon>Craniata</taxon>
        <taxon>Vertebrata</taxon>
        <taxon>Euteleostomi</taxon>
        <taxon>Lepidosauria</taxon>
        <taxon>Squamata</taxon>
        <taxon>Bifurcata</taxon>
        <taxon>Unidentata</taxon>
        <taxon>Episquamata</taxon>
        <taxon>Toxicofera</taxon>
        <taxon>Serpentes</taxon>
        <taxon>Henophidia</taxon>
        <taxon>Pythonidae</taxon>
        <taxon>Liasis</taxon>
    </lineage>
</organism>
<reference key="1">
    <citation type="thesis" date="1997" institute="Queen's University / Kingston" country="Canada">
        <title>Hic Sunt Serpentes -- molecular phylogenetics and the Boidae (Serpentes: Booidea).</title>
        <authorList>
            <person name="Campbell B.N."/>
        </authorList>
    </citation>
    <scope>NUCLEOTIDE SEQUENCE [GENOMIC DNA]</scope>
</reference>
<protein>
    <recommendedName>
        <fullName>Cytochrome b</fullName>
    </recommendedName>
    <alternativeName>
        <fullName>Complex III subunit 3</fullName>
    </alternativeName>
    <alternativeName>
        <fullName>Complex III subunit III</fullName>
    </alternativeName>
    <alternativeName>
        <fullName>Cytochrome b-c1 complex subunit 3</fullName>
    </alternativeName>
    <alternativeName>
        <fullName>Ubiquinol-cytochrome-c reductase complex cytochrome b subunit</fullName>
    </alternativeName>
</protein>
<dbReference type="EMBL" id="U69839">
    <property type="protein sequence ID" value="AAC01873.1"/>
    <property type="molecule type" value="Genomic_DNA"/>
</dbReference>
<dbReference type="EMBL" id="U69840">
    <property type="protein sequence ID" value="AAC01874.1"/>
    <property type="molecule type" value="Genomic_DNA"/>
</dbReference>
<dbReference type="SMR" id="O48094"/>
<dbReference type="GO" id="GO:0005743">
    <property type="term" value="C:mitochondrial inner membrane"/>
    <property type="evidence" value="ECO:0007669"/>
    <property type="project" value="UniProtKB-SubCell"/>
</dbReference>
<dbReference type="GO" id="GO:0045275">
    <property type="term" value="C:respiratory chain complex III"/>
    <property type="evidence" value="ECO:0007669"/>
    <property type="project" value="InterPro"/>
</dbReference>
<dbReference type="GO" id="GO:0046872">
    <property type="term" value="F:metal ion binding"/>
    <property type="evidence" value="ECO:0007669"/>
    <property type="project" value="UniProtKB-KW"/>
</dbReference>
<dbReference type="GO" id="GO:0008121">
    <property type="term" value="F:ubiquinol-cytochrome-c reductase activity"/>
    <property type="evidence" value="ECO:0007669"/>
    <property type="project" value="InterPro"/>
</dbReference>
<dbReference type="GO" id="GO:0006122">
    <property type="term" value="P:mitochondrial electron transport, ubiquinol to cytochrome c"/>
    <property type="evidence" value="ECO:0007669"/>
    <property type="project" value="TreeGrafter"/>
</dbReference>
<dbReference type="CDD" id="cd00290">
    <property type="entry name" value="cytochrome_b_C"/>
    <property type="match status" value="1"/>
</dbReference>
<dbReference type="CDD" id="cd00284">
    <property type="entry name" value="Cytochrome_b_N"/>
    <property type="match status" value="1"/>
</dbReference>
<dbReference type="Gene3D" id="1.20.810.10">
    <property type="entry name" value="Cytochrome Bc1 Complex, Chain C"/>
    <property type="match status" value="1"/>
</dbReference>
<dbReference type="InterPro" id="IPR005798">
    <property type="entry name" value="Cyt_b/b6_C"/>
</dbReference>
<dbReference type="InterPro" id="IPR036150">
    <property type="entry name" value="Cyt_b/b6_C_sf"/>
</dbReference>
<dbReference type="InterPro" id="IPR005797">
    <property type="entry name" value="Cyt_b/b6_N"/>
</dbReference>
<dbReference type="InterPro" id="IPR027387">
    <property type="entry name" value="Cytb/b6-like_sf"/>
</dbReference>
<dbReference type="InterPro" id="IPR030689">
    <property type="entry name" value="Cytochrome_b"/>
</dbReference>
<dbReference type="InterPro" id="IPR048260">
    <property type="entry name" value="Cytochrome_b_C_euk/bac"/>
</dbReference>
<dbReference type="InterPro" id="IPR048259">
    <property type="entry name" value="Cytochrome_b_N_euk/bac"/>
</dbReference>
<dbReference type="InterPro" id="IPR016174">
    <property type="entry name" value="Di-haem_cyt_TM"/>
</dbReference>
<dbReference type="PANTHER" id="PTHR19271">
    <property type="entry name" value="CYTOCHROME B"/>
    <property type="match status" value="1"/>
</dbReference>
<dbReference type="PANTHER" id="PTHR19271:SF16">
    <property type="entry name" value="CYTOCHROME B"/>
    <property type="match status" value="1"/>
</dbReference>
<dbReference type="Pfam" id="PF00032">
    <property type="entry name" value="Cytochrom_B_C"/>
    <property type="match status" value="1"/>
</dbReference>
<dbReference type="Pfam" id="PF00033">
    <property type="entry name" value="Cytochrome_B"/>
    <property type="match status" value="1"/>
</dbReference>
<dbReference type="PIRSF" id="PIRSF038885">
    <property type="entry name" value="COB"/>
    <property type="match status" value="1"/>
</dbReference>
<dbReference type="SUPFAM" id="SSF81648">
    <property type="entry name" value="a domain/subunit of cytochrome bc1 complex (Ubiquinol-cytochrome c reductase)"/>
    <property type="match status" value="1"/>
</dbReference>
<dbReference type="SUPFAM" id="SSF81342">
    <property type="entry name" value="Transmembrane di-heme cytochromes"/>
    <property type="match status" value="1"/>
</dbReference>
<dbReference type="PROSITE" id="PS51003">
    <property type="entry name" value="CYTB_CTER"/>
    <property type="match status" value="1"/>
</dbReference>
<dbReference type="PROSITE" id="PS51002">
    <property type="entry name" value="CYTB_NTER"/>
    <property type="match status" value="1"/>
</dbReference>
<keyword id="KW-0249">Electron transport</keyword>
<keyword id="KW-0349">Heme</keyword>
<keyword id="KW-0408">Iron</keyword>
<keyword id="KW-0472">Membrane</keyword>
<keyword id="KW-0479">Metal-binding</keyword>
<keyword id="KW-0496">Mitochondrion</keyword>
<keyword id="KW-0999">Mitochondrion inner membrane</keyword>
<keyword id="KW-0679">Respiratory chain</keyword>
<keyword id="KW-0812">Transmembrane</keyword>
<keyword id="KW-1133">Transmembrane helix</keyword>
<keyword id="KW-0813">Transport</keyword>
<keyword id="KW-0830">Ubiquinone</keyword>
<sequence length="371" mass="42111">MPHHYVLTLFGLLPVATNISTWWNFGSMLLTCLALQVLTGFFLAVHYTANINLAFSSIVHITRDVPYGWMMQNLHAIGASMFFICIYIHIARGLYYGSYLNKETWMSGITLLITLMATAFFGYVLPWGQMSFWAATVITNLLTAVPYLGTSLTTWLWGGFAINDPTLTRFFALHFILPFAIISLSSLHVILLHEEGSSNPLGTNPDIDKIPFHPYHSHKDLLLLTLMMMFLFIIVSFFPDIFNDPDNFSKANPLVTPQHIKPEWYFLFAYGILRSIPNKLGGALALVMSIMILFCTPFTHTAHLRPMTFRPLSQLMFWTLVSTFITITWAATKPVEPPFITISQVTSILYFTFFLSIPILGWVENKIMNAP</sequence>
<gene>
    <name type="primary">MT-CYB</name>
    <name type="synonym">COB</name>
    <name type="synonym">CYTB</name>
    <name type="synonym">MTCYB</name>
</gene>
<accession>O48094</accession>
<accession>O48095</accession>
<comment type="function">
    <text evidence="2">Component of the ubiquinol-cytochrome c reductase complex (complex III or cytochrome b-c1 complex) that is part of the mitochondrial respiratory chain. The b-c1 complex mediates electron transfer from ubiquinol to cytochrome c. Contributes to the generation of a proton gradient across the mitochondrial membrane that is then used for ATP synthesis.</text>
</comment>
<comment type="cofactor">
    <cofactor evidence="2">
        <name>heme b</name>
        <dbReference type="ChEBI" id="CHEBI:60344"/>
    </cofactor>
    <text evidence="2">Binds 2 heme b groups non-covalently.</text>
</comment>
<comment type="subunit">
    <text evidence="2">The cytochrome bc1 complex contains 3 respiratory subunits (MT-CYB, CYC1 and UQCRFS1), 2 core proteins (UQCRC1 and UQCRC2) and probably 6 low-molecular weight proteins.</text>
</comment>
<comment type="subcellular location">
    <subcellularLocation>
        <location evidence="2">Mitochondrion inner membrane</location>
        <topology evidence="2">Multi-pass membrane protein</topology>
    </subcellularLocation>
</comment>
<comment type="miscellaneous">
    <text evidence="1">Heme 1 (or BL or b562) is low-potential and absorbs at about 562 nm, and heme 2 (or BH or b566) is high-potential and absorbs at about 566 nm.</text>
</comment>
<comment type="similarity">
    <text evidence="3 4">Belongs to the cytochrome b family.</text>
</comment>
<comment type="caution">
    <text evidence="2">The full-length protein contains only eight transmembrane helices, not nine as predicted by bioinformatics tools.</text>
</comment>
<geneLocation type="mitochondrion"/>
<proteinExistence type="inferred from homology"/>
<evidence type="ECO:0000250" key="1"/>
<evidence type="ECO:0000250" key="2">
    <source>
        <dbReference type="UniProtKB" id="P00157"/>
    </source>
</evidence>
<evidence type="ECO:0000255" key="3">
    <source>
        <dbReference type="PROSITE-ProRule" id="PRU00967"/>
    </source>
</evidence>
<evidence type="ECO:0000255" key="4">
    <source>
        <dbReference type="PROSITE-ProRule" id="PRU00968"/>
    </source>
</evidence>